<sequence length="291" mass="32226">MNETLKCVVRQPSVLGECPVWSVREQVLYWADILAGRLHRLDPRDGSVSTLQLPEELGCFGLREQGGFIVALRSGIYLLDAHGQLGERLAENPTGAEHSRFNDGRVDPWGRFWAGTLWQPRDRNGGQLLRVDAEHRAQVMAGDVMVSNGLAFSPDRAWAYHSDTPNHVLYRYPLDEDGQPGTRQLLREFARGSGGRPDGAAFDSAGCYWSAQFDGGRVLRLSPDGQVLDEIQLPTRWPTMVAFGGEDLRTLYITSSRENRSAEELADWPLSGCVFATRVNVPGCAEPLFAG</sequence>
<comment type="function">
    <text evidence="2">Catalyzes the hydrolysis of 6-deoxy-6-sulfo-D-glucono-1,5-lactone to form 6-deoxy-6-sulfo-D-gluconate. Is involved in a degradation pathway of sulfoquinovose (SQ) that allows P.putida SQ1 to use SQ as the sole carbon and energy source for growth.</text>
</comment>
<comment type="catalytic activity">
    <reaction evidence="2">
        <text>6-deoxy-6-sulfo-D-glucono-1,5-lactone + H2O = 6-deoxy-6-sulfo-D-gluconate + H(+)</text>
        <dbReference type="Rhea" id="RHEA:47908"/>
        <dbReference type="ChEBI" id="CHEBI:15377"/>
        <dbReference type="ChEBI" id="CHEBI:15378"/>
        <dbReference type="ChEBI" id="CHEBI:88091"/>
        <dbReference type="ChEBI" id="CHEBI:88093"/>
        <dbReference type="EC" id="3.1.1.99"/>
    </reaction>
</comment>
<comment type="cofactor">
    <cofactor evidence="1">
        <name>a divalent metal cation</name>
        <dbReference type="ChEBI" id="CHEBI:60240"/>
    </cofactor>
    <text evidence="1">Binds 1 divalent metal cation per subunit.</text>
</comment>
<comment type="induction">
    <text evidence="2">Is highly up-regulated during growth on sulfoquinovose, compared to growth on glucose or succinate (at protein level).</text>
</comment>
<comment type="similarity">
    <text evidence="4">Belongs to the SMP-30/CGR1 family.</text>
</comment>
<proteinExistence type="evidence at protein level"/>
<organism>
    <name type="scientific">Pseudomonas putida</name>
    <name type="common">Arthrobacter siderocapsulatus</name>
    <dbReference type="NCBI Taxonomy" id="303"/>
    <lineage>
        <taxon>Bacteria</taxon>
        <taxon>Pseudomonadati</taxon>
        <taxon>Pseudomonadota</taxon>
        <taxon>Gammaproteobacteria</taxon>
        <taxon>Pseudomonadales</taxon>
        <taxon>Pseudomonadaceae</taxon>
        <taxon>Pseudomonas</taxon>
    </lineage>
</organism>
<accession>P0DOV6</accession>
<gene>
    <name evidence="5" type="ORF">PpSQ1_00410</name>
</gene>
<protein>
    <recommendedName>
        <fullName evidence="4">6-deoxy-6-sulfogluconolactonase</fullName>
        <ecNumber evidence="2">3.1.1.99</ecNumber>
    </recommendedName>
    <alternativeName>
        <fullName evidence="3">6-deoxy-6-sulfogluconolactone lactonase</fullName>
        <shortName evidence="3">SGL lactonase</shortName>
    </alternativeName>
</protein>
<keyword id="KW-0378">Hydrolase</keyword>
<keyword id="KW-0479">Metal-binding</keyword>
<reference key="1">
    <citation type="journal article" date="2015" name="Stand. Genomic Sci.">
        <title>Permanent draft genome sequence of sulfoquinovose-degrading Pseudomonas putida strain SQ1.</title>
        <authorList>
            <person name="Felux A.K."/>
            <person name="Franchini P."/>
            <person name="Schleheck D."/>
        </authorList>
    </citation>
    <scope>NUCLEOTIDE SEQUENCE [LARGE SCALE GENOMIC DNA]</scope>
    <source>
        <strain>SQ1</strain>
    </source>
</reference>
<reference key="2">
    <citation type="journal article" date="2015" name="Proc. Natl. Acad. Sci. U.S.A.">
        <title>Entner-Doudoroff pathway for sulfoquinovose degradation in Pseudomonas putida SQ1.</title>
        <authorList>
            <person name="Felux A.K."/>
            <person name="Spiteller D."/>
            <person name="Klebensberger J."/>
            <person name="Schleheck D."/>
        </authorList>
    </citation>
    <scope>FUNCTION</scope>
    <scope>CATALYTIC ACTIVITY</scope>
    <scope>INDUCTION</scope>
    <source>
        <strain>SQ1</strain>
    </source>
</reference>
<name>SGL_PSEPU</name>
<evidence type="ECO:0000250" key="1">
    <source>
        <dbReference type="UniProtKB" id="Q15493"/>
    </source>
</evidence>
<evidence type="ECO:0000269" key="2">
    <source>
    </source>
</evidence>
<evidence type="ECO:0000303" key="3">
    <source>
    </source>
</evidence>
<evidence type="ECO:0000305" key="4"/>
<evidence type="ECO:0000312" key="5">
    <source>
        <dbReference type="EMBL" id="KHL76347.1"/>
    </source>
</evidence>
<dbReference type="EC" id="3.1.1.99" evidence="2"/>
<dbReference type="EMBL" id="JTCJ01000004">
    <property type="protein sequence ID" value="KHL76347.1"/>
    <property type="molecule type" value="Genomic_DNA"/>
</dbReference>
<dbReference type="SMR" id="P0DOV6"/>
<dbReference type="GO" id="GO:0005509">
    <property type="term" value="F:calcium ion binding"/>
    <property type="evidence" value="ECO:0007669"/>
    <property type="project" value="TreeGrafter"/>
</dbReference>
<dbReference type="GO" id="GO:0004341">
    <property type="term" value="F:gluconolactonase activity"/>
    <property type="evidence" value="ECO:0007669"/>
    <property type="project" value="TreeGrafter"/>
</dbReference>
<dbReference type="GO" id="GO:0019853">
    <property type="term" value="P:L-ascorbic acid biosynthetic process"/>
    <property type="evidence" value="ECO:0007669"/>
    <property type="project" value="TreeGrafter"/>
</dbReference>
<dbReference type="Gene3D" id="2.120.10.30">
    <property type="entry name" value="TolB, C-terminal domain"/>
    <property type="match status" value="1"/>
</dbReference>
<dbReference type="InterPro" id="IPR011042">
    <property type="entry name" value="6-blade_b-propeller_TolB-like"/>
</dbReference>
<dbReference type="InterPro" id="IPR013658">
    <property type="entry name" value="SGL"/>
</dbReference>
<dbReference type="InterPro" id="IPR005511">
    <property type="entry name" value="SMP-30"/>
</dbReference>
<dbReference type="PANTHER" id="PTHR10907">
    <property type="entry name" value="REGUCALCIN"/>
    <property type="match status" value="1"/>
</dbReference>
<dbReference type="PANTHER" id="PTHR10907:SF47">
    <property type="entry name" value="REGUCALCIN"/>
    <property type="match status" value="1"/>
</dbReference>
<dbReference type="Pfam" id="PF08450">
    <property type="entry name" value="SGL"/>
    <property type="match status" value="1"/>
</dbReference>
<dbReference type="PRINTS" id="PR01790">
    <property type="entry name" value="SMP30FAMILY"/>
</dbReference>
<dbReference type="SUPFAM" id="SSF63829">
    <property type="entry name" value="Calcium-dependent phosphotriesterase"/>
    <property type="match status" value="1"/>
</dbReference>
<feature type="chain" id="PRO_0000438491" description="6-deoxy-6-sulfogluconolactonase">
    <location>
        <begin position="1"/>
        <end position="291"/>
    </location>
</feature>
<feature type="active site" description="Proton donor/acceptor" evidence="1">
    <location>
        <position position="198"/>
    </location>
</feature>
<feature type="binding site" evidence="1">
    <location>
        <position position="17"/>
    </location>
    <ligand>
        <name>a divalent metal cation</name>
        <dbReference type="ChEBI" id="CHEBI:60240"/>
    </ligand>
</feature>
<feature type="binding site" evidence="1">
    <location>
        <position position="148"/>
    </location>
    <ligand>
        <name>a divalent metal cation</name>
        <dbReference type="ChEBI" id="CHEBI:60240"/>
    </ligand>
</feature>
<feature type="binding site" evidence="1">
    <location>
        <position position="198"/>
    </location>
    <ligand>
        <name>a divalent metal cation</name>
        <dbReference type="ChEBI" id="CHEBI:60240"/>
    </ligand>
</feature>